<comment type="function">
    <text evidence="1 2 3">Linear cationic alpha-helical peptide with antimicrobial activities against both Gram-positive and Gram-negative strains and against the yeast C.albicans. Shows moderate mast cell degranulation and leishmanicidal activities. Has a very low hemolytic activity. Induces an ion channel-like incorporation in artificial lipid bilayers, forming pores with relativeley high conductances (PubMed:21549739). Its mast cell degranulation activity may be related to the activation of G-protein coupled receptors in mast cells as well as interaction with other proteins located in cell endosomal membranes in the mast cells (By similarity).</text>
</comment>
<comment type="subcellular location">
    <subcellularLocation>
        <location evidence="3">Secreted</location>
    </subcellularLocation>
    <subcellularLocation>
        <location evidence="3">Target cell membrane</location>
    </subcellularLocation>
    <text evidence="6">Assumes an amphipathic alpha-helical conformation in a lipid environment (Probable). Forms a membrane channel (Probable).</text>
</comment>
<comment type="tissue specificity">
    <text evidence="3">Expressed by the venom gland.</text>
</comment>
<comment type="mass spectrometry"/>
<comment type="similarity">
    <text evidence="5">Belongs to the MCD family. Eumenitin subfamily.</text>
</comment>
<accession>P0CJ36</accession>
<feature type="peptide" id="PRO_0000411087" description="Eumenitin-R" evidence="3">
    <location>
        <begin position="1"/>
        <end position="15"/>
    </location>
</feature>
<name>EUMER_EUMRB</name>
<dbReference type="GO" id="GO:0005576">
    <property type="term" value="C:extracellular region"/>
    <property type="evidence" value="ECO:0007669"/>
    <property type="project" value="UniProtKB-SubCell"/>
</dbReference>
<dbReference type="GO" id="GO:0016020">
    <property type="term" value="C:membrane"/>
    <property type="evidence" value="ECO:0007669"/>
    <property type="project" value="UniProtKB-KW"/>
</dbReference>
<dbReference type="GO" id="GO:0044218">
    <property type="term" value="C:other organism cell membrane"/>
    <property type="evidence" value="ECO:0007669"/>
    <property type="project" value="UniProtKB-KW"/>
</dbReference>
<dbReference type="GO" id="GO:0090729">
    <property type="term" value="F:toxin activity"/>
    <property type="evidence" value="ECO:0007669"/>
    <property type="project" value="UniProtKB-KW"/>
</dbReference>
<dbReference type="GO" id="GO:0042742">
    <property type="term" value="P:defense response to bacterium"/>
    <property type="evidence" value="ECO:0007669"/>
    <property type="project" value="UniProtKB-KW"/>
</dbReference>
<dbReference type="GO" id="GO:0050832">
    <property type="term" value="P:defense response to fungus"/>
    <property type="evidence" value="ECO:0007669"/>
    <property type="project" value="UniProtKB-KW"/>
</dbReference>
<dbReference type="GO" id="GO:0045087">
    <property type="term" value="P:innate immune response"/>
    <property type="evidence" value="ECO:0007669"/>
    <property type="project" value="UniProtKB-KW"/>
</dbReference>
<dbReference type="GO" id="GO:0031640">
    <property type="term" value="P:killing of cells of another organism"/>
    <property type="evidence" value="ECO:0007669"/>
    <property type="project" value="UniProtKB-KW"/>
</dbReference>
<protein>
    <recommendedName>
        <fullName evidence="4">Eumenitin-R</fullName>
    </recommendedName>
</protein>
<keyword id="KW-0044">Antibiotic</keyword>
<keyword id="KW-0929">Antimicrobial</keyword>
<keyword id="KW-0903">Direct protein sequencing</keyword>
<keyword id="KW-0295">Fungicide</keyword>
<keyword id="KW-1213">G-protein coupled receptor impairing toxin</keyword>
<keyword id="KW-0391">Immunity</keyword>
<keyword id="KW-0399">Innate immunity</keyword>
<keyword id="KW-0467">Mast cell degranulation</keyword>
<keyword id="KW-0472">Membrane</keyword>
<keyword id="KW-0964">Secreted</keyword>
<keyword id="KW-1052">Target cell membrane</keyword>
<keyword id="KW-1053">Target membrane</keyword>
<keyword id="KW-0800">Toxin</keyword>
<keyword id="KW-0812">Transmembrane</keyword>
<evidence type="ECO:0000250" key="1">
    <source>
        <dbReference type="UniProtKB" id="P01514"/>
    </source>
</evidence>
<evidence type="ECO:0000250" key="2">
    <source>
        <dbReference type="UniProtKB" id="P84914"/>
    </source>
</evidence>
<evidence type="ECO:0000269" key="3">
    <source>
    </source>
</evidence>
<evidence type="ECO:0000303" key="4">
    <source>
    </source>
</evidence>
<evidence type="ECO:0000305" key="5"/>
<evidence type="ECO:0000305" key="6">
    <source>
    </source>
</evidence>
<reference key="1">
    <citation type="journal article" date="2011" name="Toxicon">
        <title>Chemical and biological characterization of four new linear cationic alpha-helical peptides from the venoms of two solitary eumenine wasps.</title>
        <authorList>
            <person name="Rangel M."/>
            <person name="Dos Santos Cabrera M.P."/>
            <person name="Kazuma K."/>
            <person name="Ando K."/>
            <person name="Wang X."/>
            <person name="Kato M."/>
            <person name="Nihei K.I."/>
            <person name="Hirata I.Y."/>
            <person name="Cross T.J."/>
            <person name="Garcia A.N."/>
            <person name="Faquim-Mauro E.L."/>
            <person name="Franzolin M.R."/>
            <person name="Fuchino H."/>
            <person name="Mori-Yasumoto K."/>
            <person name="Sekita S."/>
            <person name="Kadowaki M."/>
            <person name="Satake M."/>
            <person name="Konno K."/>
        </authorList>
    </citation>
    <scope>PROTEIN SEQUENCE</scope>
    <scope>SYNTHESIS</scope>
    <scope>FUNCTION</scope>
    <scope>SUBCELLULAR LOCATION</scope>
    <scope>TISSUE SPECIFICITY</scope>
    <scope>MASS SPECTROMETRY</scope>
    <scope>CIRCULAR DICHROISM</scope>
    <source>
        <tissue>Venom</tissue>
    </source>
</reference>
<reference key="2">
    <citation type="journal article" date="2016" name="Toxins">
        <title>Peptide toxins in solitary wasp venoms.</title>
        <authorList>
            <person name="Konno K."/>
            <person name="Kazuma K."/>
            <person name="Nihei K."/>
        </authorList>
    </citation>
    <scope>REVIEW</scope>
</reference>
<sequence>LNLKGLIKKVASLLN</sequence>
<organism>
    <name type="scientific">Eumenes rubrofemoratus</name>
    <name type="common">Solitary wasp</name>
    <dbReference type="NCBI Taxonomy" id="1035770"/>
    <lineage>
        <taxon>Eukaryota</taxon>
        <taxon>Metazoa</taxon>
        <taxon>Ecdysozoa</taxon>
        <taxon>Arthropoda</taxon>
        <taxon>Hexapoda</taxon>
        <taxon>Insecta</taxon>
        <taxon>Pterygota</taxon>
        <taxon>Neoptera</taxon>
        <taxon>Endopterygota</taxon>
        <taxon>Hymenoptera</taxon>
        <taxon>Apocrita</taxon>
        <taxon>Aculeata</taxon>
        <taxon>Vespoidea</taxon>
        <taxon>Vespidae</taxon>
        <taxon>Eumeninae</taxon>
        <taxon>Eumenes</taxon>
    </lineage>
</organism>
<proteinExistence type="evidence at protein level"/>